<evidence type="ECO:0000250" key="1"/>
<evidence type="ECO:0000255" key="2"/>
<evidence type="ECO:0000255" key="3">
    <source>
        <dbReference type="PROSITE-ProRule" id="PRU01134"/>
    </source>
</evidence>
<evidence type="ECO:0000256" key="4">
    <source>
        <dbReference type="SAM" id="MobiDB-lite"/>
    </source>
</evidence>
<evidence type="ECO:0000305" key="5"/>
<proteinExistence type="evidence at transcript level"/>
<accession>Q866X7</accession>
<accession>Q08DC4</accession>
<feature type="signal peptide" evidence="2">
    <location>
        <begin position="1"/>
        <end position="22"/>
    </location>
</feature>
<feature type="chain" id="PRO_0000262534" description="Carbonic anhydrase-related protein 11">
    <location>
        <begin position="23"/>
        <end position="328"/>
    </location>
</feature>
<feature type="domain" description="Alpha-carbonic anhydrase" evidence="3">
    <location>
        <begin position="33"/>
        <end position="303"/>
    </location>
</feature>
<feature type="region of interest" description="Disordered" evidence="4">
    <location>
        <begin position="300"/>
        <end position="328"/>
    </location>
</feature>
<feature type="compositionally biased region" description="Basic and acidic residues" evidence="4">
    <location>
        <begin position="319"/>
        <end position="328"/>
    </location>
</feature>
<feature type="glycosylation site" description="N-linked (GlcNAc...) asparagine" evidence="2">
    <location>
        <position position="118"/>
    </location>
</feature>
<feature type="glycosylation site" description="N-linked (GlcNAc...) asparagine" evidence="2">
    <location>
        <position position="170"/>
    </location>
</feature>
<feature type="glycosylation site" description="N-linked (GlcNAc...) asparagine" evidence="2">
    <location>
        <position position="260"/>
    </location>
</feature>
<feature type="sequence conflict" description="In Ref. 2; AAI23828." evidence="5" ref="2">
    <original>V</original>
    <variation>A</variation>
    <location>
        <position position="63"/>
    </location>
</feature>
<name>CAH11_BOVIN</name>
<reference key="1">
    <citation type="submission" date="2002-01" db="EMBL/GenBank/DDBJ databases">
        <title>Molecular identification of carbonic anhydrases (CA) and CA-related (CAR) genes.</title>
        <authorList>
            <person name="Chen Y."/>
            <person name="Huang C.-H."/>
        </authorList>
    </citation>
    <scope>NUCLEOTIDE SEQUENCE [MRNA]</scope>
</reference>
<reference key="2">
    <citation type="submission" date="2006-09" db="EMBL/GenBank/DDBJ databases">
        <authorList>
            <consortium name="NIH - Mammalian Gene Collection (MGC) project"/>
        </authorList>
    </citation>
    <scope>NUCLEOTIDE SEQUENCE [LARGE SCALE MRNA]</scope>
    <source>
        <strain>Hereford</strain>
        <tissue>Basal ganglia</tissue>
    </source>
</reference>
<sequence>MGAAARLSAPRALVLWAALGAAAHIGPAPDPEDWWSYKDNLQGNFVPGPPFWGLVNAAWSLCVVGKRQSPVDVELKRVLYDPFLPPLRLSTGGEKLRGTLYNTGRHVSFLPAPRPVVNVSGGPLLYSHRLSELRLLFGARDGAGSEHQINHQGFSAEVQLIHFNQELYGNLSAATRGPNGLAILSLFVNVAGSSNPFLSRLLNRDTITRISYKNDAYFLQDLSLELLFPESFGFITYQGSLSTPPCSETVTWILIDRALNITSLQMHSLRLLSQNPPSQIFQSLSGNGRPLQPLAHRALRGNRDPRHPERRCRGPNYRLHVDGAPHGR</sequence>
<gene>
    <name type="primary">CA11</name>
</gene>
<comment type="function">
    <text evidence="1">Does not have a catalytic activity.</text>
</comment>
<comment type="subcellular location">
    <subcellularLocation>
        <location evidence="5">Secreted</location>
    </subcellularLocation>
</comment>
<comment type="similarity">
    <text evidence="5">Belongs to the alpha-carbonic anhydrase family.</text>
</comment>
<organism>
    <name type="scientific">Bos taurus</name>
    <name type="common">Bovine</name>
    <dbReference type="NCBI Taxonomy" id="9913"/>
    <lineage>
        <taxon>Eukaryota</taxon>
        <taxon>Metazoa</taxon>
        <taxon>Chordata</taxon>
        <taxon>Craniata</taxon>
        <taxon>Vertebrata</taxon>
        <taxon>Euteleostomi</taxon>
        <taxon>Mammalia</taxon>
        <taxon>Eutheria</taxon>
        <taxon>Laurasiatheria</taxon>
        <taxon>Artiodactyla</taxon>
        <taxon>Ruminantia</taxon>
        <taxon>Pecora</taxon>
        <taxon>Bovidae</taxon>
        <taxon>Bovinae</taxon>
        <taxon>Bos</taxon>
    </lineage>
</organism>
<keyword id="KW-0325">Glycoprotein</keyword>
<keyword id="KW-1185">Reference proteome</keyword>
<keyword id="KW-0964">Secreted</keyword>
<keyword id="KW-0732">Signal</keyword>
<dbReference type="EMBL" id="AY075023">
    <property type="protein sequence ID" value="AAL78171.1"/>
    <property type="molecule type" value="mRNA"/>
</dbReference>
<dbReference type="EMBL" id="BC123827">
    <property type="protein sequence ID" value="AAI23828.1"/>
    <property type="molecule type" value="mRNA"/>
</dbReference>
<dbReference type="RefSeq" id="NP_783648.1">
    <property type="nucleotide sequence ID" value="NM_175717.2"/>
</dbReference>
<dbReference type="SMR" id="Q866X7"/>
<dbReference type="FunCoup" id="Q866X7">
    <property type="interactions" value="800"/>
</dbReference>
<dbReference type="STRING" id="9913.ENSBTAP00000008890"/>
<dbReference type="GlyCosmos" id="Q866X7">
    <property type="glycosylation" value="3 sites, No reported glycans"/>
</dbReference>
<dbReference type="GlyGen" id="Q866X7">
    <property type="glycosylation" value="3 sites"/>
</dbReference>
<dbReference type="GeneID" id="326334"/>
<dbReference type="KEGG" id="bta:326334"/>
<dbReference type="CTD" id="770"/>
<dbReference type="InParanoid" id="Q866X7"/>
<dbReference type="OrthoDB" id="5978072at2759"/>
<dbReference type="Proteomes" id="UP000009136">
    <property type="component" value="Unplaced"/>
</dbReference>
<dbReference type="GO" id="GO:0016323">
    <property type="term" value="C:basolateral plasma membrane"/>
    <property type="evidence" value="ECO:0000318"/>
    <property type="project" value="GO_Central"/>
</dbReference>
<dbReference type="GO" id="GO:0005576">
    <property type="term" value="C:extracellular region"/>
    <property type="evidence" value="ECO:0007669"/>
    <property type="project" value="UniProtKB-SubCell"/>
</dbReference>
<dbReference type="GO" id="GO:0016836">
    <property type="term" value="F:hydro-lyase activity"/>
    <property type="evidence" value="ECO:0000318"/>
    <property type="project" value="GO_Central"/>
</dbReference>
<dbReference type="GO" id="GO:0008270">
    <property type="term" value="F:zinc ion binding"/>
    <property type="evidence" value="ECO:0007669"/>
    <property type="project" value="InterPro"/>
</dbReference>
<dbReference type="CDD" id="cd03121">
    <property type="entry name" value="alpha_CARP_X_XI_like"/>
    <property type="match status" value="1"/>
</dbReference>
<dbReference type="FunFam" id="3.10.200.10:FF:000002">
    <property type="entry name" value="Carbonic anhydrase-related protein 10"/>
    <property type="match status" value="1"/>
</dbReference>
<dbReference type="Gene3D" id="3.10.200.10">
    <property type="entry name" value="Alpha carbonic anhydrase"/>
    <property type="match status" value="1"/>
</dbReference>
<dbReference type="InterPro" id="IPR041878">
    <property type="entry name" value="Alpha_CARP_X/XI"/>
</dbReference>
<dbReference type="InterPro" id="IPR001148">
    <property type="entry name" value="CA_dom"/>
</dbReference>
<dbReference type="InterPro" id="IPR036398">
    <property type="entry name" value="CA_dom_sf"/>
</dbReference>
<dbReference type="InterPro" id="IPR023561">
    <property type="entry name" value="Carbonic_anhydrase_a-class"/>
</dbReference>
<dbReference type="PANTHER" id="PTHR18952">
    <property type="entry name" value="CARBONIC ANHYDRASE"/>
    <property type="match status" value="1"/>
</dbReference>
<dbReference type="PANTHER" id="PTHR18952:SF93">
    <property type="entry name" value="CARBONIC ANHYDRASE-RELATED PROTEIN 11"/>
    <property type="match status" value="1"/>
</dbReference>
<dbReference type="Pfam" id="PF00194">
    <property type="entry name" value="Carb_anhydrase"/>
    <property type="match status" value="1"/>
</dbReference>
<dbReference type="SMART" id="SM01057">
    <property type="entry name" value="Carb_anhydrase"/>
    <property type="match status" value="1"/>
</dbReference>
<dbReference type="SUPFAM" id="SSF51069">
    <property type="entry name" value="Carbonic anhydrase"/>
    <property type="match status" value="1"/>
</dbReference>
<dbReference type="PROSITE" id="PS51144">
    <property type="entry name" value="ALPHA_CA_2"/>
    <property type="match status" value="1"/>
</dbReference>
<protein>
    <recommendedName>
        <fullName>Carbonic anhydrase-related protein 11</fullName>
    </recommendedName>
    <alternativeName>
        <fullName>CA-RP XI</fullName>
        <shortName>CA-XI</shortName>
        <shortName>CARP XI</shortName>
    </alternativeName>
</protein>